<protein>
    <recommendedName>
        <fullName>Zinc finger protein WIP2</fullName>
    </recommendedName>
    <alternativeName>
        <fullName>Protein NO TRANSMITTING TRACT</fullName>
    </alternativeName>
    <alternativeName>
        <fullName evidence="8">WIP-domain protein 2</fullName>
        <shortName evidence="8">AtWIP2</shortName>
    </alternativeName>
</protein>
<organism>
    <name type="scientific">Arabidopsis thaliana</name>
    <name type="common">Mouse-ear cress</name>
    <dbReference type="NCBI Taxonomy" id="3702"/>
    <lineage>
        <taxon>Eukaryota</taxon>
        <taxon>Viridiplantae</taxon>
        <taxon>Streptophyta</taxon>
        <taxon>Embryophyta</taxon>
        <taxon>Tracheophyta</taxon>
        <taxon>Spermatophyta</taxon>
        <taxon>Magnoliopsida</taxon>
        <taxon>eudicotyledons</taxon>
        <taxon>Gunneridae</taxon>
        <taxon>Pentapetalae</taxon>
        <taxon>rosids</taxon>
        <taxon>malvids</taxon>
        <taxon>Brassicales</taxon>
        <taxon>Brassicaceae</taxon>
        <taxon>Camelineae</taxon>
        <taxon>Arabidopsis</taxon>
    </lineage>
</organism>
<feature type="chain" id="PRO_0000431316" description="Zinc finger protein WIP2">
    <location>
        <begin position="1"/>
        <end position="383"/>
    </location>
</feature>
<feature type="zinc finger region" description="C2H2-type 1" evidence="2">
    <location>
        <begin position="217"/>
        <end position="239"/>
    </location>
</feature>
<feature type="zinc finger region" description="C2H2-type 2; atypical" evidence="9">
    <location>
        <begin position="264"/>
        <end position="296"/>
    </location>
</feature>
<feature type="zinc finger region" description="C2H2-type 3; atypical" evidence="9">
    <location>
        <begin position="301"/>
        <end position="323"/>
    </location>
</feature>
<feature type="zinc finger region" description="C2H2-type 4; atypical" evidence="9">
    <location>
        <begin position="327"/>
        <end position="352"/>
    </location>
</feature>
<feature type="region of interest" description="Disordered" evidence="3">
    <location>
        <begin position="19"/>
        <end position="118"/>
    </location>
</feature>
<feature type="region of interest" description="Disordered" evidence="3">
    <location>
        <begin position="147"/>
        <end position="191"/>
    </location>
</feature>
<feature type="region of interest" description="Disordered" evidence="3">
    <location>
        <begin position="361"/>
        <end position="383"/>
    </location>
</feature>
<feature type="short sequence motif" description="Nuclear localization signal" evidence="1">
    <location>
        <begin position="293"/>
        <end position="296"/>
    </location>
</feature>
<feature type="short sequence motif" description="Nuclear localization signal" evidence="1">
    <location>
        <begin position="336"/>
        <end position="339"/>
    </location>
</feature>
<feature type="compositionally biased region" description="Pro residues" evidence="3">
    <location>
        <begin position="29"/>
        <end position="38"/>
    </location>
</feature>
<feature type="compositionally biased region" description="Low complexity" evidence="3">
    <location>
        <begin position="39"/>
        <end position="48"/>
    </location>
</feature>
<feature type="compositionally biased region" description="Pro residues" evidence="3">
    <location>
        <begin position="54"/>
        <end position="65"/>
    </location>
</feature>
<feature type="compositionally biased region" description="Low complexity" evidence="3">
    <location>
        <begin position="66"/>
        <end position="80"/>
    </location>
</feature>
<feature type="compositionally biased region" description="Basic and acidic residues" evidence="3">
    <location>
        <begin position="81"/>
        <end position="92"/>
    </location>
</feature>
<feature type="compositionally biased region" description="Basic and acidic residues" evidence="3">
    <location>
        <begin position="103"/>
        <end position="115"/>
    </location>
</feature>
<feature type="compositionally biased region" description="Basic and acidic residues" evidence="3">
    <location>
        <begin position="156"/>
        <end position="171"/>
    </location>
</feature>
<feature type="compositionally biased region" description="Acidic residues" evidence="3">
    <location>
        <begin position="361"/>
        <end position="373"/>
    </location>
</feature>
<feature type="compositionally biased region" description="Basic and acidic residues" evidence="3">
    <location>
        <begin position="374"/>
        <end position="383"/>
    </location>
</feature>
<feature type="sequence conflict" description="In Ref. 4; AAO64176 and 6; BAF00501." evidence="10" ref="4 6">
    <original>D</original>
    <variation>G</variation>
    <location>
        <position position="117"/>
    </location>
</feature>
<feature type="sequence conflict" description="In Ref. 4; AAO64176 and 6; BAF00501." evidence="10" ref="4 6">
    <original>D</original>
    <variation>G</variation>
    <location>
        <position position="184"/>
    </location>
</feature>
<accession>Q9SVY1</accession>
<accession>Q84TI0</accession>
<evidence type="ECO:0000250" key="1">
    <source>
        <dbReference type="UniProtKB" id="Q8VWG3"/>
    </source>
</evidence>
<evidence type="ECO:0000255" key="2">
    <source>
        <dbReference type="PROSITE-ProRule" id="PRU00042"/>
    </source>
</evidence>
<evidence type="ECO:0000256" key="3">
    <source>
        <dbReference type="SAM" id="MobiDB-lite"/>
    </source>
</evidence>
<evidence type="ECO:0000269" key="4">
    <source>
    </source>
</evidence>
<evidence type="ECO:0000269" key="5">
    <source>
    </source>
</evidence>
<evidence type="ECO:0000269" key="6">
    <source>
    </source>
</evidence>
<evidence type="ECO:0000269" key="7">
    <source>
    </source>
</evidence>
<evidence type="ECO:0000303" key="8">
    <source>
    </source>
</evidence>
<evidence type="ECO:0000303" key="9">
    <source>
    </source>
</evidence>
<evidence type="ECO:0000305" key="10"/>
<evidence type="ECO:0000312" key="11">
    <source>
        <dbReference type="Araport" id="AT3G57670"/>
    </source>
</evidence>
<evidence type="ECO:0000312" key="12">
    <source>
        <dbReference type="EMBL" id="CAB41188.1"/>
    </source>
</evidence>
<keyword id="KW-0479">Metal-binding</keyword>
<keyword id="KW-0539">Nucleus</keyword>
<keyword id="KW-1185">Reference proteome</keyword>
<keyword id="KW-0677">Repeat</keyword>
<keyword id="KW-0804">Transcription</keyword>
<keyword id="KW-0805">Transcription regulation</keyword>
<keyword id="KW-0862">Zinc</keyword>
<keyword id="KW-0863">Zinc-finger</keyword>
<proteinExistence type="evidence at protein level"/>
<name>ZWIP2_ARATH</name>
<gene>
    <name evidence="8" type="primary">WIP2</name>
    <name type="synonym">NTT</name>
    <name evidence="11" type="ordered locus">At3g57670</name>
    <name evidence="12" type="ORF">F15B8.140</name>
</gene>
<dbReference type="EMBL" id="AF254447">
    <property type="protein sequence ID" value="AAL55722.1"/>
    <property type="molecule type" value="mRNA"/>
</dbReference>
<dbReference type="EMBL" id="AL049660">
    <property type="protein sequence ID" value="CAB41188.1"/>
    <property type="molecule type" value="Genomic_DNA"/>
</dbReference>
<dbReference type="EMBL" id="CP002686">
    <property type="protein sequence ID" value="AEE79685.1"/>
    <property type="molecule type" value="Genomic_DNA"/>
</dbReference>
<dbReference type="EMBL" id="BT005772">
    <property type="protein sequence ID" value="AAO64176.1"/>
    <property type="molecule type" value="mRNA"/>
</dbReference>
<dbReference type="EMBL" id="BT021089">
    <property type="protein sequence ID" value="AAX12859.1"/>
    <property type="molecule type" value="mRNA"/>
</dbReference>
<dbReference type="EMBL" id="AK228585">
    <property type="protein sequence ID" value="BAF00501.1"/>
    <property type="molecule type" value="mRNA"/>
</dbReference>
<dbReference type="PIR" id="T06753">
    <property type="entry name" value="T06753"/>
</dbReference>
<dbReference type="RefSeq" id="NP_191326.1">
    <property type="nucleotide sequence ID" value="NM_115627.4"/>
</dbReference>
<dbReference type="BioGRID" id="10251">
    <property type="interactions" value="9"/>
</dbReference>
<dbReference type="FunCoup" id="Q9SVY1">
    <property type="interactions" value="162"/>
</dbReference>
<dbReference type="IntAct" id="Q9SVY1">
    <property type="interactions" value="36"/>
</dbReference>
<dbReference type="STRING" id="3702.Q9SVY1"/>
<dbReference type="GlyGen" id="Q9SVY1">
    <property type="glycosylation" value="2 sites"/>
</dbReference>
<dbReference type="PaxDb" id="3702-AT3G57670.1"/>
<dbReference type="EnsemblPlants" id="AT3G57670.1">
    <property type="protein sequence ID" value="AT3G57670.1"/>
    <property type="gene ID" value="AT3G57670"/>
</dbReference>
<dbReference type="GeneID" id="824936"/>
<dbReference type="Gramene" id="AT3G57670.1">
    <property type="protein sequence ID" value="AT3G57670.1"/>
    <property type="gene ID" value="AT3G57670"/>
</dbReference>
<dbReference type="KEGG" id="ath:AT3G57670"/>
<dbReference type="Araport" id="AT3G57670"/>
<dbReference type="TAIR" id="AT3G57670">
    <property type="gene designation" value="NTT"/>
</dbReference>
<dbReference type="eggNOG" id="KOG1721">
    <property type="taxonomic scope" value="Eukaryota"/>
</dbReference>
<dbReference type="HOGENOM" id="CLU_052255_0_1_1"/>
<dbReference type="InParanoid" id="Q9SVY1"/>
<dbReference type="OMA" id="DNDHESM"/>
<dbReference type="PhylomeDB" id="Q9SVY1"/>
<dbReference type="PRO" id="PR:Q9SVY1"/>
<dbReference type="Proteomes" id="UP000006548">
    <property type="component" value="Chromosome 3"/>
</dbReference>
<dbReference type="ExpressionAtlas" id="Q9SVY1">
    <property type="expression patterns" value="baseline and differential"/>
</dbReference>
<dbReference type="GO" id="GO:0005634">
    <property type="term" value="C:nucleus"/>
    <property type="evidence" value="ECO:0000314"/>
    <property type="project" value="TAIR"/>
</dbReference>
<dbReference type="GO" id="GO:0003700">
    <property type="term" value="F:DNA-binding transcription factor activity"/>
    <property type="evidence" value="ECO:0000250"/>
    <property type="project" value="TAIR"/>
</dbReference>
<dbReference type="GO" id="GO:0008270">
    <property type="term" value="F:zinc ion binding"/>
    <property type="evidence" value="ECO:0007669"/>
    <property type="project" value="UniProtKB-KW"/>
</dbReference>
<dbReference type="GO" id="GO:0001709">
    <property type="term" value="P:cell fate determination"/>
    <property type="evidence" value="ECO:0000315"/>
    <property type="project" value="TAIR"/>
</dbReference>
<dbReference type="GO" id="GO:1990058">
    <property type="term" value="P:fruit replum development"/>
    <property type="evidence" value="ECO:0000315"/>
    <property type="project" value="UniProtKB"/>
</dbReference>
<dbReference type="GO" id="GO:0009860">
    <property type="term" value="P:pollen tube growth"/>
    <property type="evidence" value="ECO:0000315"/>
    <property type="project" value="TAIR"/>
</dbReference>
<dbReference type="GO" id="GO:0080022">
    <property type="term" value="P:primary root development"/>
    <property type="evidence" value="ECO:0000316"/>
    <property type="project" value="TAIR"/>
</dbReference>
<dbReference type="GO" id="GO:0006355">
    <property type="term" value="P:regulation of DNA-templated transcription"/>
    <property type="evidence" value="ECO:0000304"/>
    <property type="project" value="TAIR"/>
</dbReference>
<dbReference type="GO" id="GO:0010468">
    <property type="term" value="P:regulation of gene expression"/>
    <property type="evidence" value="ECO:0000315"/>
    <property type="project" value="TAIR"/>
</dbReference>
<dbReference type="GO" id="GO:0010500">
    <property type="term" value="P:transmitting tissue development"/>
    <property type="evidence" value="ECO:0000315"/>
    <property type="project" value="TAIR"/>
</dbReference>
<dbReference type="FunFam" id="3.30.160.60:FF:000523">
    <property type="entry name" value="Zinc finger protein WIP2"/>
    <property type="match status" value="1"/>
</dbReference>
<dbReference type="FunFam" id="3.30.160.60:FF:001230">
    <property type="entry name" value="zinc finger protein WIP2-like"/>
    <property type="match status" value="1"/>
</dbReference>
<dbReference type="Gene3D" id="3.30.160.60">
    <property type="entry name" value="Classic Zinc Finger"/>
    <property type="match status" value="2"/>
</dbReference>
<dbReference type="InterPro" id="IPR055187">
    <property type="entry name" value="C2CH-3rd_BIRD-IDD"/>
</dbReference>
<dbReference type="InterPro" id="IPR043584">
    <property type="entry name" value="WIP1/2/3/4/5/6"/>
</dbReference>
<dbReference type="InterPro" id="IPR036236">
    <property type="entry name" value="Znf_C2H2_sf"/>
</dbReference>
<dbReference type="InterPro" id="IPR013087">
    <property type="entry name" value="Znf_C2H2_type"/>
</dbReference>
<dbReference type="PANTHER" id="PTHR45878">
    <property type="entry name" value="ZINC FINGER PROTEIN WIP2"/>
    <property type="match status" value="1"/>
</dbReference>
<dbReference type="PANTHER" id="PTHR45878:SF1">
    <property type="entry name" value="ZINC FINGER PROTEIN WIP2"/>
    <property type="match status" value="1"/>
</dbReference>
<dbReference type="Pfam" id="PF22995">
    <property type="entry name" value="C2CH-3rd_BIRD-IDD"/>
    <property type="match status" value="1"/>
</dbReference>
<dbReference type="Pfam" id="PF00096">
    <property type="entry name" value="zf-C2H2"/>
    <property type="match status" value="1"/>
</dbReference>
<dbReference type="Pfam" id="PF23115">
    <property type="entry name" value="zf-C2H2_STOP2_3rd"/>
    <property type="match status" value="1"/>
</dbReference>
<dbReference type="SMART" id="SM00355">
    <property type="entry name" value="ZnF_C2H2"/>
    <property type="match status" value="2"/>
</dbReference>
<dbReference type="SUPFAM" id="SSF57667">
    <property type="entry name" value="beta-beta-alpha zinc fingers"/>
    <property type="match status" value="1"/>
</dbReference>
<dbReference type="PROSITE" id="PS00028">
    <property type="entry name" value="ZINC_FINGER_C2H2_1"/>
    <property type="match status" value="1"/>
</dbReference>
<dbReference type="PROSITE" id="PS50157">
    <property type="entry name" value="ZINC_FINGER_C2H2_2"/>
    <property type="match status" value="2"/>
</dbReference>
<sequence length="383" mass="43337">MTDPYSNFFTDWFKSNPFHHYPNSSTNPSPHPLPPVTPPSSFFFFPQSGDLRRPPPPPTPPPSPPLREALPLLSLSPANKQQDHHHNHDHLIQEPPSTSMDVDYDHHHQDDHHNLDDDDHDVTVALHIGLPSPSAQEMASLLMMSSSSSSSRTTHHHEDMNHKKDLDHEYSHGAVGGGEDDDEDSVGGDGGCRISRLNKGQYWIPTPSQILIGPTQFSCPVCFKTFNRYNNMQMHMWGHGSQYRKGPESLRGTQPTGMLRLPCYCCAPGCRNNIDHPRAKPLKDFRTLQTHYKRKHGIKPFMCRKCGKAFAVRGDWRTHEKNCGKLWYCICGSDFKHKRSLKDHIKAFGNGHGAYGIDGFDEEDEPASEVEQLDNDHESMQSK</sequence>
<comment type="function">
    <text evidence="4 6 7">Transcriptional regulator required for normal differentiation of the ovary transmitting tract cells and pollen tube growth. In Arabidopsis, the transmitting tract facilitates the transport of pollen tubes to the ovules for fertilization (PubMed:17600712). May play a role in the regulation of AGL8/FUL, which is required for normal pattern of cell division, expansion and differentiation during morphogenesis of the silique (PubMed:23515580). Plays a role in replum development by the activation of the homeobox protein KNAT1 (PubMed:25039392).</text>
</comment>
<comment type="subunit">
    <text evidence="7">Can form homodimers. Interacts with BLH9, STM, AGL8/FUL, AGL1/SHP1 and AGL5/SHP2.</text>
</comment>
<comment type="interaction">
    <interactant intactId="EBI-1999175">
        <id>Q9SVY1</id>
    </interactant>
    <interactant intactId="EBI-621949">
        <id>P29385</id>
        <label>AGL5</label>
    </interactant>
    <organismsDiffer>false</organismsDiffer>
    <experiments>3</experiments>
</comment>
<comment type="subcellular location">
    <subcellularLocation>
        <location evidence="5 6 7">Nucleus</location>
    </subcellularLocation>
</comment>
<comment type="tissue specificity">
    <text evidence="4">Expressed in developing carpels (PubMed:17600712). Expressed in the shoot apical meristem and the replum (PubMed:25039392).</text>
</comment>
<comment type="disruption phenotype">
    <text evidence="4 7">Reduced fertility, fruit length and seed set (PubMed:17600712). Reduced replum width and cell number (PubMed:25039392).</text>
</comment>
<comment type="miscellaneous">
    <text evidence="6">The fruits of the gain-of-function mutant ntt-3D (T-DNA tagging) fail to dehisce.</text>
</comment>
<comment type="similarity">
    <text evidence="10">Belongs to the WIP C2H2-type zinc-finger protein family.</text>
</comment>
<reference key="1">
    <citation type="journal article" date="2002" name="Genes Dev.">
        <title>A. thaliana TRANSPARENT TESTA 1 is involved in seed coat development and defines the WIP subfamily of plant zinc finger proteins.</title>
        <authorList>
            <person name="Sagasser M."/>
            <person name="Lu G.-H."/>
            <person name="Hahlbrock K."/>
            <person name="Weisshaar B."/>
        </authorList>
    </citation>
    <scope>NUCLEOTIDE SEQUENCE [MRNA]</scope>
    <source>
        <strain>cv. Columbia</strain>
    </source>
</reference>
<reference key="2">
    <citation type="journal article" date="2000" name="Nature">
        <title>Sequence and analysis of chromosome 3 of the plant Arabidopsis thaliana.</title>
        <authorList>
            <person name="Salanoubat M."/>
            <person name="Lemcke K."/>
            <person name="Rieger M."/>
            <person name="Ansorge W."/>
            <person name="Unseld M."/>
            <person name="Fartmann B."/>
            <person name="Valle G."/>
            <person name="Bloecker H."/>
            <person name="Perez-Alonso M."/>
            <person name="Obermaier B."/>
            <person name="Delseny M."/>
            <person name="Boutry M."/>
            <person name="Grivell L.A."/>
            <person name="Mache R."/>
            <person name="Puigdomenech P."/>
            <person name="De Simone V."/>
            <person name="Choisne N."/>
            <person name="Artiguenave F."/>
            <person name="Robert C."/>
            <person name="Brottier P."/>
            <person name="Wincker P."/>
            <person name="Cattolico L."/>
            <person name="Weissenbach J."/>
            <person name="Saurin W."/>
            <person name="Quetier F."/>
            <person name="Schaefer M."/>
            <person name="Mueller-Auer S."/>
            <person name="Gabel C."/>
            <person name="Fuchs M."/>
            <person name="Benes V."/>
            <person name="Wurmbach E."/>
            <person name="Drzonek H."/>
            <person name="Erfle H."/>
            <person name="Jordan N."/>
            <person name="Bangert S."/>
            <person name="Wiedelmann R."/>
            <person name="Kranz H."/>
            <person name="Voss H."/>
            <person name="Holland R."/>
            <person name="Brandt P."/>
            <person name="Nyakatura G."/>
            <person name="Vezzi A."/>
            <person name="D'Angelo M."/>
            <person name="Pallavicini A."/>
            <person name="Toppo S."/>
            <person name="Simionati B."/>
            <person name="Conrad A."/>
            <person name="Hornischer K."/>
            <person name="Kauer G."/>
            <person name="Loehnert T.-H."/>
            <person name="Nordsiek G."/>
            <person name="Reichelt J."/>
            <person name="Scharfe M."/>
            <person name="Schoen O."/>
            <person name="Bargues M."/>
            <person name="Terol J."/>
            <person name="Climent J."/>
            <person name="Navarro P."/>
            <person name="Collado C."/>
            <person name="Perez-Perez A."/>
            <person name="Ottenwaelder B."/>
            <person name="Duchemin D."/>
            <person name="Cooke R."/>
            <person name="Laudie M."/>
            <person name="Berger-Llauro C."/>
            <person name="Purnelle B."/>
            <person name="Masuy D."/>
            <person name="de Haan M."/>
            <person name="Maarse A.C."/>
            <person name="Alcaraz J.-P."/>
            <person name="Cottet A."/>
            <person name="Casacuberta E."/>
            <person name="Monfort A."/>
            <person name="Argiriou A."/>
            <person name="Flores M."/>
            <person name="Liguori R."/>
            <person name="Vitale D."/>
            <person name="Mannhaupt G."/>
            <person name="Haase D."/>
            <person name="Schoof H."/>
            <person name="Rudd S."/>
            <person name="Zaccaria P."/>
            <person name="Mewes H.-W."/>
            <person name="Mayer K.F.X."/>
            <person name="Kaul S."/>
            <person name="Town C.D."/>
            <person name="Koo H.L."/>
            <person name="Tallon L.J."/>
            <person name="Jenkins J."/>
            <person name="Rooney T."/>
            <person name="Rizzo M."/>
            <person name="Walts A."/>
            <person name="Utterback T."/>
            <person name="Fujii C.Y."/>
            <person name="Shea T.P."/>
            <person name="Creasy T.H."/>
            <person name="Haas B."/>
            <person name="Maiti R."/>
            <person name="Wu D."/>
            <person name="Peterson J."/>
            <person name="Van Aken S."/>
            <person name="Pai G."/>
            <person name="Militscher J."/>
            <person name="Sellers P."/>
            <person name="Gill J.E."/>
            <person name="Feldblyum T.V."/>
            <person name="Preuss D."/>
            <person name="Lin X."/>
            <person name="Nierman W.C."/>
            <person name="Salzberg S.L."/>
            <person name="White O."/>
            <person name="Venter J.C."/>
            <person name="Fraser C.M."/>
            <person name="Kaneko T."/>
            <person name="Nakamura Y."/>
            <person name="Sato S."/>
            <person name="Kato T."/>
            <person name="Asamizu E."/>
            <person name="Sasamoto S."/>
            <person name="Kimura T."/>
            <person name="Idesawa K."/>
            <person name="Kawashima K."/>
            <person name="Kishida Y."/>
            <person name="Kiyokawa C."/>
            <person name="Kohara M."/>
            <person name="Matsumoto M."/>
            <person name="Matsuno A."/>
            <person name="Muraki A."/>
            <person name="Nakayama S."/>
            <person name="Nakazaki N."/>
            <person name="Shinpo S."/>
            <person name="Takeuchi C."/>
            <person name="Wada T."/>
            <person name="Watanabe A."/>
            <person name="Yamada M."/>
            <person name="Yasuda M."/>
            <person name="Tabata S."/>
        </authorList>
    </citation>
    <scope>NUCLEOTIDE SEQUENCE [LARGE SCALE GENOMIC DNA]</scope>
    <source>
        <strain>cv. Columbia</strain>
    </source>
</reference>
<reference key="3">
    <citation type="journal article" date="2017" name="Plant J.">
        <title>Araport11: a complete reannotation of the Arabidopsis thaliana reference genome.</title>
        <authorList>
            <person name="Cheng C.Y."/>
            <person name="Krishnakumar V."/>
            <person name="Chan A.P."/>
            <person name="Thibaud-Nissen F."/>
            <person name="Schobel S."/>
            <person name="Town C.D."/>
        </authorList>
    </citation>
    <scope>GENOME REANNOTATION</scope>
    <source>
        <strain>cv. Columbia</strain>
    </source>
</reference>
<reference key="4">
    <citation type="journal article" date="2003" name="Science">
        <title>Empirical analysis of transcriptional activity in the Arabidopsis genome.</title>
        <authorList>
            <person name="Yamada K."/>
            <person name="Lim J."/>
            <person name="Dale J.M."/>
            <person name="Chen H."/>
            <person name="Shinn P."/>
            <person name="Palm C.J."/>
            <person name="Southwick A.M."/>
            <person name="Wu H.C."/>
            <person name="Kim C.J."/>
            <person name="Nguyen M."/>
            <person name="Pham P.K."/>
            <person name="Cheuk R.F."/>
            <person name="Karlin-Newmann G."/>
            <person name="Liu S.X."/>
            <person name="Lam B."/>
            <person name="Sakano H."/>
            <person name="Wu T."/>
            <person name="Yu G."/>
            <person name="Miranda M."/>
            <person name="Quach H.L."/>
            <person name="Tripp M."/>
            <person name="Chang C.H."/>
            <person name="Lee J.M."/>
            <person name="Toriumi M.J."/>
            <person name="Chan M.M."/>
            <person name="Tang C.C."/>
            <person name="Onodera C.S."/>
            <person name="Deng J.M."/>
            <person name="Akiyama K."/>
            <person name="Ansari Y."/>
            <person name="Arakawa T."/>
            <person name="Banh J."/>
            <person name="Banno F."/>
            <person name="Bowser L."/>
            <person name="Brooks S.Y."/>
            <person name="Carninci P."/>
            <person name="Chao Q."/>
            <person name="Choy N."/>
            <person name="Enju A."/>
            <person name="Goldsmith A.D."/>
            <person name="Gurjal M."/>
            <person name="Hansen N.F."/>
            <person name="Hayashizaki Y."/>
            <person name="Johnson-Hopson C."/>
            <person name="Hsuan V.W."/>
            <person name="Iida K."/>
            <person name="Karnes M."/>
            <person name="Khan S."/>
            <person name="Koesema E."/>
            <person name="Ishida J."/>
            <person name="Jiang P.X."/>
            <person name="Jones T."/>
            <person name="Kawai J."/>
            <person name="Kamiya A."/>
            <person name="Meyers C."/>
            <person name="Nakajima M."/>
            <person name="Narusaka M."/>
            <person name="Seki M."/>
            <person name="Sakurai T."/>
            <person name="Satou M."/>
            <person name="Tamse R."/>
            <person name="Vaysberg M."/>
            <person name="Wallender E.K."/>
            <person name="Wong C."/>
            <person name="Yamamura Y."/>
            <person name="Yuan S."/>
            <person name="Shinozaki K."/>
            <person name="Davis R.W."/>
            <person name="Theologis A."/>
            <person name="Ecker J.R."/>
        </authorList>
    </citation>
    <scope>NUCLEOTIDE SEQUENCE [LARGE SCALE MRNA]</scope>
    <source>
        <strain>cv. Columbia</strain>
    </source>
</reference>
<reference key="5">
    <citation type="submission" date="2005-02" db="EMBL/GenBank/DDBJ databases">
        <title>Arabidopsis ORF clones.</title>
        <authorList>
            <person name="Kim C.J."/>
            <person name="Chen H."/>
            <person name="Cheuk R.F."/>
            <person name="Shinn P."/>
            <person name="Ecker J.R."/>
        </authorList>
    </citation>
    <scope>NUCLEOTIDE SEQUENCE [LARGE SCALE MRNA]</scope>
    <source>
        <strain>cv. Columbia</strain>
    </source>
</reference>
<reference key="6">
    <citation type="submission" date="2006-07" db="EMBL/GenBank/DDBJ databases">
        <title>Large-scale analysis of RIKEN Arabidopsis full-length (RAFL) cDNAs.</title>
        <authorList>
            <person name="Totoki Y."/>
            <person name="Seki M."/>
            <person name="Ishida J."/>
            <person name="Nakajima M."/>
            <person name="Enju A."/>
            <person name="Kamiya A."/>
            <person name="Narusaka M."/>
            <person name="Shin-i T."/>
            <person name="Nakagawa M."/>
            <person name="Sakamoto N."/>
            <person name="Oishi K."/>
            <person name="Kohara Y."/>
            <person name="Kobayashi M."/>
            <person name="Toyoda A."/>
            <person name="Sakaki Y."/>
            <person name="Sakurai T."/>
            <person name="Iida K."/>
            <person name="Akiyama K."/>
            <person name="Satou M."/>
            <person name="Toyoda T."/>
            <person name="Konagaya A."/>
            <person name="Carninci P."/>
            <person name="Kawai J."/>
            <person name="Hayashizaki Y."/>
            <person name="Shinozaki K."/>
        </authorList>
    </citation>
    <scope>NUCLEOTIDE SEQUENCE [LARGE SCALE MRNA]</scope>
    <source>
        <strain>cv. Columbia</strain>
    </source>
</reference>
<reference key="7">
    <citation type="journal article" date="2007" name="Curr. Biol.">
        <title>The NTT gene is required for transmitting-tract development in carpels of Arabidopsis thaliana.</title>
        <authorList>
            <person name="Crawford B.C."/>
            <person name="Ditta G."/>
            <person name="Yanofsky M.F."/>
        </authorList>
    </citation>
    <scope>FUNCTION</scope>
    <scope>TISSUE SPECIFICITY</scope>
    <scope>DISRUPTION PHENOTYPE</scope>
</reference>
<reference key="8">
    <citation type="journal article" date="2010" name="FEBS Lett.">
        <title>Weird fingers: functional analysis of WIP domain proteins.</title>
        <authorList>
            <person name="Appelhagen I."/>
            <person name="Huep G."/>
            <person name="Lu G.H."/>
            <person name="Strompen G."/>
            <person name="Weisshaar B."/>
            <person name="Sagasser M."/>
        </authorList>
    </citation>
    <scope>SUBCELLULAR LOCATION</scope>
    <scope>ZINC-FINGER</scope>
</reference>
<reference key="9">
    <citation type="journal article" date="2013" name="Mol. Cells">
        <title>Fruit indehiscence caused by enhanced expression of NO TRANSMITTING TRACT in Arabidopsis thaliana.</title>
        <authorList>
            <person name="Chung K.S."/>
            <person name="Lee J.H."/>
            <person name="Lee J.S."/>
            <person name="Ahn J.H."/>
        </authorList>
    </citation>
    <scope>FUNCTION</scope>
    <scope>SUBCELLULAR LOCATION</scope>
    <scope>SUBUNIT</scope>
    <scope>INTERACTION WITH BLH9; STM; AGL8/FUL; AGL1/SHP1 AND AGL5/SHP2</scope>
</reference>
<reference key="10">
    <citation type="journal article" date="2014" name="Plant J.">
        <title>The NTT transcription factor promotes replum development in Arabidopsis fruits.</title>
        <authorList>
            <person name="Marsch-Martinez N."/>
            <person name="Zuniga-Mayo V.M."/>
            <person name="Herrera-Ubaldo H."/>
            <person name="Ouwerkerk P.B."/>
            <person name="Pablo-Villa J."/>
            <person name="Lozano-Sotomayor P."/>
            <person name="Greco R."/>
            <person name="Ballester P."/>
            <person name="Balanza V."/>
            <person name="Kuijt S.J."/>
            <person name="Meijer A.H."/>
            <person name="Pereira A."/>
            <person name="Ferrandiz C."/>
            <person name="de Folter S."/>
        </authorList>
    </citation>
    <scope>FUNCTION</scope>
    <scope>TISSUE SPECIFICITY</scope>
    <scope>SUBCELLULAR LOCATION</scope>
</reference>